<proteinExistence type="evidence at protein level"/>
<keyword id="KW-0008">Acetylcholine receptor inhibiting toxin</keyword>
<keyword id="KW-0903">Direct protein sequencing</keyword>
<keyword id="KW-1015">Disulfide bond</keyword>
<keyword id="KW-0872">Ion channel impairing toxin</keyword>
<keyword id="KW-0528">Neurotoxin</keyword>
<keyword id="KW-0629">Postsynaptic neurotoxin</keyword>
<keyword id="KW-1185">Reference proteome</keyword>
<keyword id="KW-0964">Secreted</keyword>
<keyword id="KW-0732">Signal</keyword>
<keyword id="KW-0800">Toxin</keyword>
<sequence>MKTLLLTLVVVTIVCLDLGYTRTCFITPDVKSKPCPPGQEVCYTKTWCDGFCGIRGKRVDLGCAATCPTPKKTGIDIICCSTDDCNTFPLRPRGRLSSIKDHP</sequence>
<organism>
    <name type="scientific">Pseudonaja textilis</name>
    <name type="common">Eastern brown snake</name>
    <dbReference type="NCBI Taxonomy" id="8673"/>
    <lineage>
        <taxon>Eukaryota</taxon>
        <taxon>Metazoa</taxon>
        <taxon>Chordata</taxon>
        <taxon>Craniata</taxon>
        <taxon>Vertebrata</taxon>
        <taxon>Euteleostomi</taxon>
        <taxon>Lepidosauria</taxon>
        <taxon>Squamata</taxon>
        <taxon>Bifurcata</taxon>
        <taxon>Unidentata</taxon>
        <taxon>Episquamata</taxon>
        <taxon>Toxicofera</taxon>
        <taxon>Serpentes</taxon>
        <taxon>Colubroidea</taxon>
        <taxon>Elapidae</taxon>
        <taxon>Hydrophiinae</taxon>
        <taxon>Pseudonaja</taxon>
    </lineage>
</organism>
<reference key="1">
    <citation type="journal article" date="2001" name="Biochem. J.">
        <title>Cloning and characterization of the pseudonajatoxin b precursor.</title>
        <authorList>
            <person name="Gong N.L."/>
            <person name="Armugam A."/>
            <person name="Mirtschin P."/>
            <person name="Jeyaseelan K."/>
        </authorList>
    </citation>
    <scope>NUCLEOTIDE SEQUENCE [GENOMIC DNA / MRNA]</scope>
    <scope>PROTEIN SEQUENCE OF 22-36</scope>
    <scope>SUBCELLULAR LOCATION</scope>
    <source>
        <tissue>Liver</tissue>
        <tissue>Venom</tissue>
        <tissue>Venom gland</tissue>
    </source>
</reference>
<reference key="2">
    <citation type="journal article" date="2006" name="Mol. Cell. Proteomics">
        <title>Molecular diversity in venom from the Australian Brown snake, Pseudonaja textilis.</title>
        <authorList>
            <person name="Birrell G.W."/>
            <person name="Earl S."/>
            <person name="Masci P.P."/>
            <person name="de Jersey J."/>
            <person name="Wallis T.P."/>
            <person name="Gorman J.J."/>
            <person name="Lavin M.F."/>
        </authorList>
    </citation>
    <scope>PROTEIN SEQUENCE OF 22-33</scope>
    <scope>IDENTIFICATION BY MASS SPECTROMETRY</scope>
    <source>
        <tissue>Venom</tissue>
    </source>
</reference>
<protein>
    <recommendedName>
        <fullName>Pseudonajatoxin b homolog</fullName>
    </recommendedName>
    <alternativeName>
        <fullName>Pt-bp</fullName>
    </alternativeName>
</protein>
<evidence type="ECO:0000250" key="1"/>
<evidence type="ECO:0000250" key="2">
    <source>
        <dbReference type="UniProtKB" id="P60615"/>
    </source>
</evidence>
<evidence type="ECO:0000269" key="3">
    <source>
    </source>
</evidence>
<evidence type="ECO:0000269" key="4">
    <source>
    </source>
</evidence>
<evidence type="ECO:0000305" key="5"/>
<dbReference type="EMBL" id="AF082982">
    <property type="protein sequence ID" value="AAD40974.1"/>
    <property type="molecule type" value="mRNA"/>
</dbReference>
<dbReference type="EMBL" id="AY027493">
    <property type="protein sequence ID" value="AAK15774.1"/>
    <property type="molecule type" value="Genomic_DNA"/>
</dbReference>
<dbReference type="SMR" id="Q9W7J5"/>
<dbReference type="Proteomes" id="UP000472273">
    <property type="component" value="Unplaced"/>
</dbReference>
<dbReference type="GO" id="GO:0005576">
    <property type="term" value="C:extracellular region"/>
    <property type="evidence" value="ECO:0007669"/>
    <property type="project" value="UniProtKB-SubCell"/>
</dbReference>
<dbReference type="GO" id="GO:0030550">
    <property type="term" value="F:acetylcholine receptor inhibitor activity"/>
    <property type="evidence" value="ECO:0007669"/>
    <property type="project" value="UniProtKB-KW"/>
</dbReference>
<dbReference type="GO" id="GO:0099106">
    <property type="term" value="F:ion channel regulator activity"/>
    <property type="evidence" value="ECO:0007669"/>
    <property type="project" value="UniProtKB-KW"/>
</dbReference>
<dbReference type="GO" id="GO:0090729">
    <property type="term" value="F:toxin activity"/>
    <property type="evidence" value="ECO:0007669"/>
    <property type="project" value="UniProtKB-KW"/>
</dbReference>
<dbReference type="CDD" id="cd00206">
    <property type="entry name" value="TFP_snake_toxin"/>
    <property type="match status" value="1"/>
</dbReference>
<dbReference type="Gene3D" id="2.10.60.10">
    <property type="entry name" value="CD59"/>
    <property type="match status" value="1"/>
</dbReference>
<dbReference type="InterPro" id="IPR003571">
    <property type="entry name" value="Snake_3FTx"/>
</dbReference>
<dbReference type="InterPro" id="IPR045860">
    <property type="entry name" value="Snake_toxin-like_sf"/>
</dbReference>
<dbReference type="InterPro" id="IPR018354">
    <property type="entry name" value="Snake_toxin_con_site"/>
</dbReference>
<dbReference type="InterPro" id="IPR054131">
    <property type="entry name" value="Toxin_cobra-type"/>
</dbReference>
<dbReference type="Pfam" id="PF21947">
    <property type="entry name" value="Toxin_cobra-type"/>
    <property type="match status" value="1"/>
</dbReference>
<dbReference type="SUPFAM" id="SSF57302">
    <property type="entry name" value="Snake toxin-like"/>
    <property type="match status" value="1"/>
</dbReference>
<dbReference type="PROSITE" id="PS00272">
    <property type="entry name" value="SNAKE_TOXIN"/>
    <property type="match status" value="1"/>
</dbReference>
<accession>Q9W7J5</accession>
<feature type="signal peptide" evidence="3 4">
    <location>
        <begin position="1"/>
        <end position="21"/>
    </location>
</feature>
<feature type="chain" id="PRO_0000035432" description="Pseudonajatoxin b homolog">
    <location>
        <begin position="22"/>
        <end position="103"/>
    </location>
</feature>
<feature type="disulfide bond" evidence="1">
    <location>
        <begin position="24"/>
        <end position="42"/>
    </location>
</feature>
<feature type="disulfide bond" evidence="1">
    <location>
        <begin position="35"/>
        <end position="63"/>
    </location>
</feature>
<feature type="disulfide bond" evidence="1">
    <location>
        <begin position="48"/>
        <end position="52"/>
    </location>
</feature>
<feature type="disulfide bond" evidence="1">
    <location>
        <begin position="67"/>
        <end position="79"/>
    </location>
</feature>
<feature type="disulfide bond" evidence="1">
    <location>
        <begin position="80"/>
        <end position="85"/>
    </location>
</feature>
<feature type="sequence conflict" description="In Ref. 2; AA sequence." evidence="5" ref="2">
    <original>I</original>
    <variation>K</variation>
    <location>
        <position position="26"/>
    </location>
</feature>
<feature type="sequence conflict" description="In Ref. 2; AA sequence." evidence="5" ref="2">
    <original>D</original>
    <variation>Y</variation>
    <location>
        <position position="29"/>
    </location>
</feature>
<feature type="sequence conflict" description="In Ref. 2; AA sequence." evidence="5" ref="2">
    <original>K</original>
    <variation>E</variation>
    <location>
        <position position="33"/>
    </location>
</feature>
<comment type="function">
    <text evidence="2">Binds with high affinity to muscular (alpha-1/CHRNA1) and neuronal (alpha-7/CHRNA7) nicotinic acetylcholine receptor (nAChR) and inhibits acetylcholine from binding to the receptor, thereby impairing neuromuscular and neuronal transmission.</text>
</comment>
<comment type="subcellular location">
    <subcellularLocation>
        <location evidence="3">Secreted</location>
    </subcellularLocation>
</comment>
<comment type="tissue specificity">
    <text evidence="5">Expressed by the venom gland.</text>
</comment>
<comment type="similarity">
    <text evidence="5">Belongs to the three-finger toxin family. Long-chain subfamily. Type II alpha-neurotoxin sub-subfamily.</text>
</comment>
<comment type="caution">
    <text evidence="5">Could be the precursor of pseudonajatoxin b. But there are three amino-acid differences that could be strain variations or due to a multigene family.</text>
</comment>
<name>3L2P_PSETE</name>